<keyword id="KW-0066">ATP synthesis</keyword>
<keyword id="KW-1003">Cell membrane</keyword>
<keyword id="KW-0138">CF(0)</keyword>
<keyword id="KW-0375">Hydrogen ion transport</keyword>
<keyword id="KW-0406">Ion transport</keyword>
<keyword id="KW-0472">Membrane</keyword>
<keyword id="KW-0812">Transmembrane</keyword>
<keyword id="KW-1133">Transmembrane helix</keyword>
<keyword id="KW-0813">Transport</keyword>
<accession>Q6G7K1</accession>
<feature type="chain" id="PRO_1000145315" description="ATP synthase subunit a">
    <location>
        <begin position="1"/>
        <end position="242"/>
    </location>
</feature>
<feature type="transmembrane region" description="Helical" evidence="1">
    <location>
        <begin position="21"/>
        <end position="41"/>
    </location>
</feature>
<feature type="transmembrane region" description="Helical" evidence="1">
    <location>
        <begin position="83"/>
        <end position="103"/>
    </location>
</feature>
<feature type="transmembrane region" description="Helical" evidence="1">
    <location>
        <begin position="117"/>
        <end position="137"/>
    </location>
</feature>
<feature type="transmembrane region" description="Helical" evidence="1">
    <location>
        <begin position="175"/>
        <end position="195"/>
    </location>
</feature>
<feature type="transmembrane region" description="Helical" evidence="1">
    <location>
        <begin position="198"/>
        <end position="218"/>
    </location>
</feature>
<protein>
    <recommendedName>
        <fullName evidence="1">ATP synthase subunit a</fullName>
    </recommendedName>
    <alternativeName>
        <fullName evidence="1">ATP synthase F0 sector subunit a</fullName>
    </alternativeName>
    <alternativeName>
        <fullName evidence="1">F-ATPase subunit 6</fullName>
    </alternativeName>
</protein>
<name>ATP6_STAAS</name>
<gene>
    <name evidence="1" type="primary">atpB</name>
    <name type="ordered locus">SAS2012</name>
</gene>
<sequence>MDHKSPLVSWNLFGFDIVFNLSSILMILVTAFLVFLLAIICTRNLKKRPTGKQNFVEWIFDFVRGIIEGNMAWKKGGQFHFLAVTLILYIFIANMLGLPFSIVTKDHTLWWKSPTADATVTLTLSTTIILLTHFYGIKMRGTKQYLKGYVQPFWPLAIINVFEEFTSTLTLGLRLYGNIFAGEILLTLLAGLFFNEPAWGWIISIPGLIVWQAFSIFVGTIQAYIFIMLSMVYMSHKVADEH</sequence>
<organism>
    <name type="scientific">Staphylococcus aureus (strain MSSA476)</name>
    <dbReference type="NCBI Taxonomy" id="282459"/>
    <lineage>
        <taxon>Bacteria</taxon>
        <taxon>Bacillati</taxon>
        <taxon>Bacillota</taxon>
        <taxon>Bacilli</taxon>
        <taxon>Bacillales</taxon>
        <taxon>Staphylococcaceae</taxon>
        <taxon>Staphylococcus</taxon>
    </lineage>
</organism>
<reference key="1">
    <citation type="journal article" date="2004" name="Proc. Natl. Acad. Sci. U.S.A.">
        <title>Complete genomes of two clinical Staphylococcus aureus strains: evidence for the rapid evolution of virulence and drug resistance.</title>
        <authorList>
            <person name="Holden M.T.G."/>
            <person name="Feil E.J."/>
            <person name="Lindsay J.A."/>
            <person name="Peacock S.J."/>
            <person name="Day N.P.J."/>
            <person name="Enright M.C."/>
            <person name="Foster T.J."/>
            <person name="Moore C.E."/>
            <person name="Hurst L."/>
            <person name="Atkin R."/>
            <person name="Barron A."/>
            <person name="Bason N."/>
            <person name="Bentley S.D."/>
            <person name="Chillingworth C."/>
            <person name="Chillingworth T."/>
            <person name="Churcher C."/>
            <person name="Clark L."/>
            <person name="Corton C."/>
            <person name="Cronin A."/>
            <person name="Doggett J."/>
            <person name="Dowd L."/>
            <person name="Feltwell T."/>
            <person name="Hance Z."/>
            <person name="Harris B."/>
            <person name="Hauser H."/>
            <person name="Holroyd S."/>
            <person name="Jagels K."/>
            <person name="James K.D."/>
            <person name="Lennard N."/>
            <person name="Line A."/>
            <person name="Mayes R."/>
            <person name="Moule S."/>
            <person name="Mungall K."/>
            <person name="Ormond D."/>
            <person name="Quail M.A."/>
            <person name="Rabbinowitsch E."/>
            <person name="Rutherford K.M."/>
            <person name="Sanders M."/>
            <person name="Sharp S."/>
            <person name="Simmonds M."/>
            <person name="Stevens K."/>
            <person name="Whitehead S."/>
            <person name="Barrell B.G."/>
            <person name="Spratt B.G."/>
            <person name="Parkhill J."/>
        </authorList>
    </citation>
    <scope>NUCLEOTIDE SEQUENCE [LARGE SCALE GENOMIC DNA]</scope>
    <source>
        <strain>MSSA476</strain>
    </source>
</reference>
<comment type="function">
    <text evidence="1">Key component of the proton channel; it plays a direct role in the translocation of protons across the membrane.</text>
</comment>
<comment type="subunit">
    <text evidence="1">F-type ATPases have 2 components, CF(1) - the catalytic core - and CF(0) - the membrane proton channel. CF(1) has five subunits: alpha(3), beta(3), gamma(1), delta(1), epsilon(1). CF(0) has three main subunits: a(1), b(2) and c(9-12). The alpha and beta chains form an alternating ring which encloses part of the gamma chain. CF(1) is attached to CF(0) by a central stalk formed by the gamma and epsilon chains, while a peripheral stalk is formed by the delta and b chains.</text>
</comment>
<comment type="subcellular location">
    <subcellularLocation>
        <location evidence="1">Cell membrane</location>
        <topology evidence="1">Multi-pass membrane protein</topology>
    </subcellularLocation>
</comment>
<comment type="similarity">
    <text evidence="1">Belongs to the ATPase A chain family.</text>
</comment>
<evidence type="ECO:0000255" key="1">
    <source>
        <dbReference type="HAMAP-Rule" id="MF_01393"/>
    </source>
</evidence>
<dbReference type="EMBL" id="BX571857">
    <property type="protein sequence ID" value="CAG43820.1"/>
    <property type="molecule type" value="Genomic_DNA"/>
</dbReference>
<dbReference type="RefSeq" id="WP_000349655.1">
    <property type="nucleotide sequence ID" value="NC_002953.3"/>
</dbReference>
<dbReference type="SMR" id="Q6G7K1"/>
<dbReference type="KEGG" id="sas:SAS2012"/>
<dbReference type="HOGENOM" id="CLU_041018_2_3_9"/>
<dbReference type="GO" id="GO:0005886">
    <property type="term" value="C:plasma membrane"/>
    <property type="evidence" value="ECO:0007669"/>
    <property type="project" value="UniProtKB-SubCell"/>
</dbReference>
<dbReference type="GO" id="GO:0045259">
    <property type="term" value="C:proton-transporting ATP synthase complex"/>
    <property type="evidence" value="ECO:0007669"/>
    <property type="project" value="UniProtKB-KW"/>
</dbReference>
<dbReference type="GO" id="GO:0046933">
    <property type="term" value="F:proton-transporting ATP synthase activity, rotational mechanism"/>
    <property type="evidence" value="ECO:0007669"/>
    <property type="project" value="UniProtKB-UniRule"/>
</dbReference>
<dbReference type="GO" id="GO:0042777">
    <property type="term" value="P:proton motive force-driven plasma membrane ATP synthesis"/>
    <property type="evidence" value="ECO:0007669"/>
    <property type="project" value="TreeGrafter"/>
</dbReference>
<dbReference type="CDD" id="cd00310">
    <property type="entry name" value="ATP-synt_Fo_a_6"/>
    <property type="match status" value="1"/>
</dbReference>
<dbReference type="FunFam" id="1.20.120.220:FF:000005">
    <property type="entry name" value="ATP synthase subunit a"/>
    <property type="match status" value="1"/>
</dbReference>
<dbReference type="Gene3D" id="1.20.120.220">
    <property type="entry name" value="ATP synthase, F0 complex, subunit A"/>
    <property type="match status" value="1"/>
</dbReference>
<dbReference type="HAMAP" id="MF_01393">
    <property type="entry name" value="ATP_synth_a_bact"/>
    <property type="match status" value="1"/>
</dbReference>
<dbReference type="InterPro" id="IPR045082">
    <property type="entry name" value="ATP_syn_F0_a_bact/chloroplast"/>
</dbReference>
<dbReference type="InterPro" id="IPR000568">
    <property type="entry name" value="ATP_synth_F0_asu"/>
</dbReference>
<dbReference type="InterPro" id="IPR023011">
    <property type="entry name" value="ATP_synth_F0_asu_AS"/>
</dbReference>
<dbReference type="InterPro" id="IPR035908">
    <property type="entry name" value="F0_ATP_A_sf"/>
</dbReference>
<dbReference type="NCBIfam" id="TIGR01131">
    <property type="entry name" value="ATP_synt_6_or_A"/>
    <property type="match status" value="1"/>
</dbReference>
<dbReference type="NCBIfam" id="NF004479">
    <property type="entry name" value="PRK05815.1-4"/>
    <property type="match status" value="1"/>
</dbReference>
<dbReference type="PANTHER" id="PTHR42823">
    <property type="entry name" value="ATP SYNTHASE SUBUNIT A, CHLOROPLASTIC"/>
    <property type="match status" value="1"/>
</dbReference>
<dbReference type="PANTHER" id="PTHR42823:SF3">
    <property type="entry name" value="ATP SYNTHASE SUBUNIT A, CHLOROPLASTIC"/>
    <property type="match status" value="1"/>
</dbReference>
<dbReference type="Pfam" id="PF00119">
    <property type="entry name" value="ATP-synt_A"/>
    <property type="match status" value="1"/>
</dbReference>
<dbReference type="PRINTS" id="PR00123">
    <property type="entry name" value="ATPASEA"/>
</dbReference>
<dbReference type="SUPFAM" id="SSF81336">
    <property type="entry name" value="F1F0 ATP synthase subunit A"/>
    <property type="match status" value="1"/>
</dbReference>
<dbReference type="PROSITE" id="PS00449">
    <property type="entry name" value="ATPASE_A"/>
    <property type="match status" value="1"/>
</dbReference>
<proteinExistence type="inferred from homology"/>